<accession>Q2RV34</accession>
<dbReference type="EC" id="1.1.1.37" evidence="1"/>
<dbReference type="EMBL" id="CP000230">
    <property type="protein sequence ID" value="ABC22011.1"/>
    <property type="molecule type" value="Genomic_DNA"/>
</dbReference>
<dbReference type="RefSeq" id="WP_011388965.1">
    <property type="nucleotide sequence ID" value="NC_007643.1"/>
</dbReference>
<dbReference type="RefSeq" id="YP_426298.1">
    <property type="nucleotide sequence ID" value="NC_007643.1"/>
</dbReference>
<dbReference type="SMR" id="Q2RV34"/>
<dbReference type="STRING" id="269796.Rru_A1210"/>
<dbReference type="EnsemblBacteria" id="ABC22011">
    <property type="protein sequence ID" value="ABC22011"/>
    <property type="gene ID" value="Rru_A1210"/>
</dbReference>
<dbReference type="KEGG" id="rru:Rru_A1210"/>
<dbReference type="PATRIC" id="fig|269796.9.peg.1275"/>
<dbReference type="eggNOG" id="COG0039">
    <property type="taxonomic scope" value="Bacteria"/>
</dbReference>
<dbReference type="HOGENOM" id="CLU_045401_2_1_5"/>
<dbReference type="PhylomeDB" id="Q2RV34"/>
<dbReference type="Proteomes" id="UP000001929">
    <property type="component" value="Chromosome"/>
</dbReference>
<dbReference type="GO" id="GO:0004459">
    <property type="term" value="F:L-lactate dehydrogenase activity"/>
    <property type="evidence" value="ECO:0007669"/>
    <property type="project" value="TreeGrafter"/>
</dbReference>
<dbReference type="GO" id="GO:0030060">
    <property type="term" value="F:L-malate dehydrogenase (NAD+) activity"/>
    <property type="evidence" value="ECO:0007669"/>
    <property type="project" value="UniProtKB-UniRule"/>
</dbReference>
<dbReference type="GO" id="GO:0006089">
    <property type="term" value="P:lactate metabolic process"/>
    <property type="evidence" value="ECO:0007669"/>
    <property type="project" value="TreeGrafter"/>
</dbReference>
<dbReference type="GO" id="GO:0006099">
    <property type="term" value="P:tricarboxylic acid cycle"/>
    <property type="evidence" value="ECO:0007669"/>
    <property type="project" value="UniProtKB-UniRule"/>
</dbReference>
<dbReference type="CDD" id="cd01339">
    <property type="entry name" value="LDH-like_MDH"/>
    <property type="match status" value="1"/>
</dbReference>
<dbReference type="FunFam" id="3.40.50.720:FF:000018">
    <property type="entry name" value="Malate dehydrogenase"/>
    <property type="match status" value="1"/>
</dbReference>
<dbReference type="FunFam" id="3.90.110.10:FF:000004">
    <property type="entry name" value="Malate dehydrogenase"/>
    <property type="match status" value="1"/>
</dbReference>
<dbReference type="Gene3D" id="3.90.110.10">
    <property type="entry name" value="Lactate dehydrogenase/glycoside hydrolase, family 4, C-terminal"/>
    <property type="match status" value="1"/>
</dbReference>
<dbReference type="Gene3D" id="3.40.50.720">
    <property type="entry name" value="NAD(P)-binding Rossmann-like Domain"/>
    <property type="match status" value="1"/>
</dbReference>
<dbReference type="HAMAP" id="MF_00487">
    <property type="entry name" value="Malate_dehydrog_3"/>
    <property type="match status" value="1"/>
</dbReference>
<dbReference type="InterPro" id="IPR001557">
    <property type="entry name" value="L-lactate/malate_DH"/>
</dbReference>
<dbReference type="InterPro" id="IPR022383">
    <property type="entry name" value="Lactate/malate_DH_C"/>
</dbReference>
<dbReference type="InterPro" id="IPR001236">
    <property type="entry name" value="Lactate/malate_DH_N"/>
</dbReference>
<dbReference type="InterPro" id="IPR015955">
    <property type="entry name" value="Lactate_DH/Glyco_Ohase_4_C"/>
</dbReference>
<dbReference type="InterPro" id="IPR011275">
    <property type="entry name" value="Malate_DH_type3"/>
</dbReference>
<dbReference type="InterPro" id="IPR036291">
    <property type="entry name" value="NAD(P)-bd_dom_sf"/>
</dbReference>
<dbReference type="NCBIfam" id="TIGR01763">
    <property type="entry name" value="MalateDH_bact"/>
    <property type="match status" value="1"/>
</dbReference>
<dbReference type="NCBIfam" id="NF004863">
    <property type="entry name" value="PRK06223.1"/>
    <property type="match status" value="1"/>
</dbReference>
<dbReference type="PANTHER" id="PTHR43128">
    <property type="entry name" value="L-2-HYDROXYCARBOXYLATE DEHYDROGENASE (NAD(P)(+))"/>
    <property type="match status" value="1"/>
</dbReference>
<dbReference type="PANTHER" id="PTHR43128:SF16">
    <property type="entry name" value="L-LACTATE DEHYDROGENASE"/>
    <property type="match status" value="1"/>
</dbReference>
<dbReference type="Pfam" id="PF02866">
    <property type="entry name" value="Ldh_1_C"/>
    <property type="match status" value="1"/>
</dbReference>
<dbReference type="Pfam" id="PF00056">
    <property type="entry name" value="Ldh_1_N"/>
    <property type="match status" value="1"/>
</dbReference>
<dbReference type="PIRSF" id="PIRSF000102">
    <property type="entry name" value="Lac_mal_DH"/>
    <property type="match status" value="1"/>
</dbReference>
<dbReference type="PRINTS" id="PR00086">
    <property type="entry name" value="LLDHDRGNASE"/>
</dbReference>
<dbReference type="SUPFAM" id="SSF56327">
    <property type="entry name" value="LDH C-terminal domain-like"/>
    <property type="match status" value="1"/>
</dbReference>
<dbReference type="SUPFAM" id="SSF51735">
    <property type="entry name" value="NAD(P)-binding Rossmann-fold domains"/>
    <property type="match status" value="1"/>
</dbReference>
<keyword id="KW-0520">NAD</keyword>
<keyword id="KW-0560">Oxidoreductase</keyword>
<keyword id="KW-1185">Reference proteome</keyword>
<keyword id="KW-0816">Tricarboxylic acid cycle</keyword>
<comment type="function">
    <text evidence="1">Catalyzes the reversible oxidation of malate to oxaloacetate.</text>
</comment>
<comment type="catalytic activity">
    <reaction evidence="1">
        <text>(S)-malate + NAD(+) = oxaloacetate + NADH + H(+)</text>
        <dbReference type="Rhea" id="RHEA:21432"/>
        <dbReference type="ChEBI" id="CHEBI:15378"/>
        <dbReference type="ChEBI" id="CHEBI:15589"/>
        <dbReference type="ChEBI" id="CHEBI:16452"/>
        <dbReference type="ChEBI" id="CHEBI:57540"/>
        <dbReference type="ChEBI" id="CHEBI:57945"/>
        <dbReference type="EC" id="1.1.1.37"/>
    </reaction>
</comment>
<comment type="similarity">
    <text evidence="1">Belongs to the LDH/MDH superfamily. MDH type 3 family.</text>
</comment>
<proteinExistence type="inferred from homology"/>
<organism>
    <name type="scientific">Rhodospirillum rubrum (strain ATCC 11170 / ATH 1.1.1 / DSM 467 / LMG 4362 / NCIMB 8255 / S1)</name>
    <dbReference type="NCBI Taxonomy" id="269796"/>
    <lineage>
        <taxon>Bacteria</taxon>
        <taxon>Pseudomonadati</taxon>
        <taxon>Pseudomonadota</taxon>
        <taxon>Alphaproteobacteria</taxon>
        <taxon>Rhodospirillales</taxon>
        <taxon>Rhodospirillaceae</taxon>
        <taxon>Rhodospirillum</taxon>
    </lineage>
</organism>
<gene>
    <name evidence="1" type="primary">mdh</name>
    <name type="ordered locus">Rru_A1210</name>
</gene>
<name>MDH_RHORT</name>
<evidence type="ECO:0000255" key="1">
    <source>
        <dbReference type="HAMAP-Rule" id="MF_00487"/>
    </source>
</evidence>
<sequence>MARKKIALVGAGNIGGTLAHLIGLKELGDVVLFDIAEGTPQGKALDIAESTPIEGVDASYSGSNDYAAIKDADVVIVTAGVPRKPGMSRDDLIGINAKVMSAVGQGIRANCPNAFVICITNPLDAMVWVLREVSGLPHNKVVGMAGVLDSARFRYFLSEEFNVSVKDVNAFVLGGHGDTMVPLPRYSTVAGIPLPDLVKMGWTTQEKLDQIIQRTRDGGAEIVGLLKTGSAFYAPAAAAVQMAEAYLKDQKRVLPCAAWVEGQYGLDGIYVGVPTIIGAGGIEKVIEIELNADEKAAFAKSVDSVRGLIAASKELMPK</sequence>
<feature type="chain" id="PRO_0000241965" description="Malate dehydrogenase">
    <location>
        <begin position="1"/>
        <end position="318"/>
    </location>
</feature>
<feature type="active site" description="Proton acceptor" evidence="1">
    <location>
        <position position="176"/>
    </location>
</feature>
<feature type="binding site" evidence="1">
    <location>
        <begin position="10"/>
        <end position="15"/>
    </location>
    <ligand>
        <name>NAD(+)</name>
        <dbReference type="ChEBI" id="CHEBI:57540"/>
    </ligand>
</feature>
<feature type="binding site" evidence="1">
    <location>
        <position position="34"/>
    </location>
    <ligand>
        <name>NAD(+)</name>
        <dbReference type="ChEBI" id="CHEBI:57540"/>
    </ligand>
</feature>
<feature type="binding site" evidence="1">
    <location>
        <position position="83"/>
    </location>
    <ligand>
        <name>substrate</name>
    </ligand>
</feature>
<feature type="binding site" evidence="1">
    <location>
        <position position="89"/>
    </location>
    <ligand>
        <name>substrate</name>
    </ligand>
</feature>
<feature type="binding site" evidence="1">
    <location>
        <position position="96"/>
    </location>
    <ligand>
        <name>NAD(+)</name>
        <dbReference type="ChEBI" id="CHEBI:57540"/>
    </ligand>
</feature>
<feature type="binding site" evidence="1">
    <location>
        <begin position="119"/>
        <end position="121"/>
    </location>
    <ligand>
        <name>NAD(+)</name>
        <dbReference type="ChEBI" id="CHEBI:57540"/>
    </ligand>
</feature>
<feature type="binding site" evidence="1">
    <location>
        <position position="121"/>
    </location>
    <ligand>
        <name>substrate</name>
    </ligand>
</feature>
<feature type="binding site" evidence="1">
    <location>
        <position position="152"/>
    </location>
    <ligand>
        <name>substrate</name>
    </ligand>
</feature>
<protein>
    <recommendedName>
        <fullName evidence="1">Malate dehydrogenase</fullName>
        <ecNumber evidence="1">1.1.1.37</ecNumber>
    </recommendedName>
</protein>
<reference key="1">
    <citation type="journal article" date="2011" name="Stand. Genomic Sci.">
        <title>Complete genome sequence of Rhodospirillum rubrum type strain (S1).</title>
        <authorList>
            <person name="Munk A.C."/>
            <person name="Copeland A."/>
            <person name="Lucas S."/>
            <person name="Lapidus A."/>
            <person name="Del Rio T.G."/>
            <person name="Barry K."/>
            <person name="Detter J.C."/>
            <person name="Hammon N."/>
            <person name="Israni S."/>
            <person name="Pitluck S."/>
            <person name="Brettin T."/>
            <person name="Bruce D."/>
            <person name="Han C."/>
            <person name="Tapia R."/>
            <person name="Gilna P."/>
            <person name="Schmutz J."/>
            <person name="Larimer F."/>
            <person name="Land M."/>
            <person name="Kyrpides N.C."/>
            <person name="Mavromatis K."/>
            <person name="Richardson P."/>
            <person name="Rohde M."/>
            <person name="Goeker M."/>
            <person name="Klenk H.P."/>
            <person name="Zhang Y."/>
            <person name="Roberts G.P."/>
            <person name="Reslewic S."/>
            <person name="Schwartz D.C."/>
        </authorList>
    </citation>
    <scope>NUCLEOTIDE SEQUENCE [LARGE SCALE GENOMIC DNA]</scope>
    <source>
        <strain>ATCC 11170 / ATH 1.1.1 / DSM 467 / LMG 4362 / NCIMB 8255 / S1</strain>
    </source>
</reference>